<keyword id="KW-0067">ATP-binding</keyword>
<keyword id="KW-0072">Autophagy</keyword>
<keyword id="KW-0963">Cytoplasm</keyword>
<keyword id="KW-0418">Kinase</keyword>
<keyword id="KW-0472">Membrane</keyword>
<keyword id="KW-0547">Nucleotide-binding</keyword>
<keyword id="KW-0653">Protein transport</keyword>
<keyword id="KW-1185">Reference proteome</keyword>
<keyword id="KW-0723">Serine/threonine-protein kinase</keyword>
<keyword id="KW-0808">Transferase</keyword>
<keyword id="KW-0813">Transport</keyword>
<sequence length="972" mass="109057">MNNVKSGGRPVAIVAERYVVEKEIGRGSFAVVYKGHLADSSAGNVAIKAVSRSKLRNKKLLENLEIEIAILKKIKHPHIVGLLECERTGTDFYLMMEYCALGDLTFFIKKRRSLMDKHPLVRTLFEKYPPPSEHHNGLNRVLVVNYLQQLSSALKFLRSKNLVHRDIKPQNLLLSTPLVDYNDPAEFHARGFVGIYNLPILKIADFGFARFLPNTSLAETLCGSPLYMAPEILNYQKYNAKADLWSVGTVLYEMCCGKPPFKASNHLELFQKIKKANDVIQFPKHAALESAMVDLICGLLTFEPAKRMGFTEFFSNGLVNEDLSPYEVESEPDLETKSKNVAESNMFISEYLPTAERNKRASPIRLGDSCTLRGPCESPQGADPYPQDNTQSDQHEHLHADYSFQVEMGQDGQQADGEEKRKLYNNQEERSNEERQFGQVSNGRNQEDQLLLHQGRGQIPCEQNRQALQSHSHVAAKQIPDKDSKSSVSCQKHAASAPTKNDHRTTRLKEKTKCSYSDLLLEKEYVVVEKKSVEVNALADEFAQAGSGAPAIRLPDQHHNDASQALQMARHSSTSVSAANTAKQTLLRRNSRTLSSSGASTSRRPSLVDRRLSITSLGATNALSKALGMASLRLFGNSHQQSSNGSSTFKQNPNVTSLLSPQTFQDMTENAVLSADHQWDNSRQADVLHDDSIMKALENLTAKVYAIYSFAEVKFSQIIPLPPSSTQDPYTHKRMSNGSCAIDDEEDDIEHSPGAETYRKNSSGANANTGNYNFSLDTIHEMNLNDLPPNDLYILCTEAIVLYMKSLSLLAYAMHLTSKWWHESADKICPLKLNLLVQWIRERFNECLEKAEFLRMKTQSIQLHNGNQLSASTMVSEPVFVEKLIYDRALDISKTAAKMEMQGEYLEGCEVAYSTSLWMLEALLDDVSDEDNYNDDNLGHTGVLDKSDKEVIKRYIDSIANRLKALRRKLSR</sequence>
<evidence type="ECO:0000250" key="1">
    <source>
        <dbReference type="UniProtKB" id="P53104"/>
    </source>
</evidence>
<evidence type="ECO:0000255" key="2">
    <source>
        <dbReference type="PROSITE-ProRule" id="PRU00159"/>
    </source>
</evidence>
<evidence type="ECO:0000255" key="3">
    <source>
        <dbReference type="PROSITE-ProRule" id="PRU10027"/>
    </source>
</evidence>
<evidence type="ECO:0000256" key="4">
    <source>
        <dbReference type="SAM" id="MobiDB-lite"/>
    </source>
</evidence>
<evidence type="ECO:0000303" key="5">
    <source>
    </source>
</evidence>
<dbReference type="EC" id="2.7.11.1" evidence="1"/>
<dbReference type="EMBL" id="AE016816">
    <property type="protein sequence ID" value="AAS51174.1"/>
    <property type="molecule type" value="Genomic_DNA"/>
</dbReference>
<dbReference type="RefSeq" id="NP_983350.1">
    <property type="nucleotide sequence ID" value="NM_208703.1"/>
</dbReference>
<dbReference type="SMR" id="Q75CH3"/>
<dbReference type="FunCoup" id="Q75CH3">
    <property type="interactions" value="144"/>
</dbReference>
<dbReference type="STRING" id="284811.Q75CH3"/>
<dbReference type="EnsemblFungi" id="AAS51174">
    <property type="protein sequence ID" value="AAS51174"/>
    <property type="gene ID" value="AGOS_ACL054W"/>
</dbReference>
<dbReference type="GeneID" id="4619475"/>
<dbReference type="KEGG" id="ago:AGOS_ACL054W"/>
<dbReference type="eggNOG" id="KOG0595">
    <property type="taxonomic scope" value="Eukaryota"/>
</dbReference>
<dbReference type="HOGENOM" id="CLU_006447_0_0_1"/>
<dbReference type="InParanoid" id="Q75CH3"/>
<dbReference type="OMA" id="INNVVQW"/>
<dbReference type="OrthoDB" id="346907at2759"/>
<dbReference type="Proteomes" id="UP000000591">
    <property type="component" value="Chromosome III"/>
</dbReference>
<dbReference type="GO" id="GO:1990316">
    <property type="term" value="C:Atg1/ULK1 kinase complex"/>
    <property type="evidence" value="ECO:0007669"/>
    <property type="project" value="EnsemblFungi"/>
</dbReference>
<dbReference type="GO" id="GO:0005776">
    <property type="term" value="C:autophagosome"/>
    <property type="evidence" value="ECO:0000318"/>
    <property type="project" value="GO_Central"/>
</dbReference>
<dbReference type="GO" id="GO:0000421">
    <property type="term" value="C:autophagosome membrane"/>
    <property type="evidence" value="ECO:0007669"/>
    <property type="project" value="EnsemblFungi"/>
</dbReference>
<dbReference type="GO" id="GO:0005737">
    <property type="term" value="C:cytoplasm"/>
    <property type="evidence" value="ECO:0000318"/>
    <property type="project" value="GO_Central"/>
</dbReference>
<dbReference type="GO" id="GO:0005829">
    <property type="term" value="C:cytosol"/>
    <property type="evidence" value="ECO:0000318"/>
    <property type="project" value="GO_Central"/>
</dbReference>
<dbReference type="GO" id="GO:0061908">
    <property type="term" value="C:phagophore"/>
    <property type="evidence" value="ECO:0007669"/>
    <property type="project" value="EnsemblFungi"/>
</dbReference>
<dbReference type="GO" id="GO:0000407">
    <property type="term" value="C:phagophore assembly site"/>
    <property type="evidence" value="ECO:0000318"/>
    <property type="project" value="GO_Central"/>
</dbReference>
<dbReference type="GO" id="GO:0034045">
    <property type="term" value="C:phagophore assembly site membrane"/>
    <property type="evidence" value="ECO:0000318"/>
    <property type="project" value="GO_Central"/>
</dbReference>
<dbReference type="GO" id="GO:0120095">
    <property type="term" value="C:vacuole-isolation membrane contact site"/>
    <property type="evidence" value="ECO:0007669"/>
    <property type="project" value="EnsemblFungi"/>
</dbReference>
<dbReference type="GO" id="GO:0005524">
    <property type="term" value="F:ATP binding"/>
    <property type="evidence" value="ECO:0007669"/>
    <property type="project" value="UniProtKB-KW"/>
</dbReference>
<dbReference type="GO" id="GO:0106310">
    <property type="term" value="F:protein serine kinase activity"/>
    <property type="evidence" value="ECO:0007669"/>
    <property type="project" value="RHEA"/>
</dbReference>
<dbReference type="GO" id="GO:0004674">
    <property type="term" value="F:protein serine/threonine kinase activity"/>
    <property type="evidence" value="ECO:0000318"/>
    <property type="project" value="GO_Central"/>
</dbReference>
<dbReference type="GO" id="GO:0000045">
    <property type="term" value="P:autophagosome assembly"/>
    <property type="evidence" value="ECO:0000318"/>
    <property type="project" value="GO_Central"/>
</dbReference>
<dbReference type="GO" id="GO:0006995">
    <property type="term" value="P:cellular response to nitrogen starvation"/>
    <property type="evidence" value="ECO:0007669"/>
    <property type="project" value="EnsemblFungi"/>
</dbReference>
<dbReference type="GO" id="GO:0051365">
    <property type="term" value="P:cellular response to potassium ion starvation"/>
    <property type="evidence" value="ECO:0007669"/>
    <property type="project" value="EnsemblFungi"/>
</dbReference>
<dbReference type="GO" id="GO:0032258">
    <property type="term" value="P:cytoplasm to vacuole targeting by the Cvt pathway"/>
    <property type="evidence" value="ECO:0007669"/>
    <property type="project" value="EnsemblFungi"/>
</dbReference>
<dbReference type="GO" id="GO:0000423">
    <property type="term" value="P:mitophagy"/>
    <property type="evidence" value="ECO:0000318"/>
    <property type="project" value="GO_Central"/>
</dbReference>
<dbReference type="GO" id="GO:0034727">
    <property type="term" value="P:piecemeal microautophagy of the nucleus"/>
    <property type="evidence" value="ECO:0000318"/>
    <property type="project" value="GO_Central"/>
</dbReference>
<dbReference type="GO" id="GO:0034497">
    <property type="term" value="P:protein localization to phagophore assembly site"/>
    <property type="evidence" value="ECO:0007669"/>
    <property type="project" value="EnsemblFungi"/>
</dbReference>
<dbReference type="GO" id="GO:0010506">
    <property type="term" value="P:regulation of autophagy"/>
    <property type="evidence" value="ECO:0000318"/>
    <property type="project" value="GO_Central"/>
</dbReference>
<dbReference type="GO" id="GO:0042594">
    <property type="term" value="P:response to starvation"/>
    <property type="evidence" value="ECO:0000318"/>
    <property type="project" value="GO_Central"/>
</dbReference>
<dbReference type="GO" id="GO:0061709">
    <property type="term" value="P:reticulophagy"/>
    <property type="evidence" value="ECO:0000318"/>
    <property type="project" value="GO_Central"/>
</dbReference>
<dbReference type="CDD" id="cd14009">
    <property type="entry name" value="STKc_ATG1_ULK_like"/>
    <property type="match status" value="1"/>
</dbReference>
<dbReference type="FunFam" id="1.10.510.10:FF:000817">
    <property type="entry name" value="Serine/threonine-protein kinase ATG1"/>
    <property type="match status" value="1"/>
</dbReference>
<dbReference type="Gene3D" id="1.10.510.10">
    <property type="entry name" value="Transferase(Phosphotransferase) domain 1"/>
    <property type="match status" value="1"/>
</dbReference>
<dbReference type="InterPro" id="IPR045269">
    <property type="entry name" value="Atg1-like"/>
</dbReference>
<dbReference type="InterPro" id="IPR048941">
    <property type="entry name" value="ATG1-like_MIT2"/>
</dbReference>
<dbReference type="InterPro" id="IPR022708">
    <property type="entry name" value="Atg1-like_tMIT"/>
</dbReference>
<dbReference type="InterPro" id="IPR011009">
    <property type="entry name" value="Kinase-like_dom_sf"/>
</dbReference>
<dbReference type="InterPro" id="IPR000719">
    <property type="entry name" value="Prot_kinase_dom"/>
</dbReference>
<dbReference type="InterPro" id="IPR017441">
    <property type="entry name" value="Protein_kinase_ATP_BS"/>
</dbReference>
<dbReference type="InterPro" id="IPR008271">
    <property type="entry name" value="Ser/Thr_kinase_AS"/>
</dbReference>
<dbReference type="PANTHER" id="PTHR24348:SF22">
    <property type="entry name" value="NON-SPECIFIC SERINE_THREONINE PROTEIN KINASE"/>
    <property type="match status" value="1"/>
</dbReference>
<dbReference type="PANTHER" id="PTHR24348">
    <property type="entry name" value="SERINE/THREONINE-PROTEIN KINASE UNC-51-RELATED"/>
    <property type="match status" value="1"/>
</dbReference>
<dbReference type="Pfam" id="PF12063">
    <property type="entry name" value="ATG1-like_MIT1"/>
    <property type="match status" value="1"/>
</dbReference>
<dbReference type="Pfam" id="PF21127">
    <property type="entry name" value="ATG1-like_MIT2"/>
    <property type="match status" value="1"/>
</dbReference>
<dbReference type="Pfam" id="PF00069">
    <property type="entry name" value="Pkinase"/>
    <property type="match status" value="1"/>
</dbReference>
<dbReference type="SMART" id="SM00220">
    <property type="entry name" value="S_TKc"/>
    <property type="match status" value="1"/>
</dbReference>
<dbReference type="SUPFAM" id="SSF56112">
    <property type="entry name" value="Protein kinase-like (PK-like)"/>
    <property type="match status" value="1"/>
</dbReference>
<dbReference type="PROSITE" id="PS00107">
    <property type="entry name" value="PROTEIN_KINASE_ATP"/>
    <property type="match status" value="1"/>
</dbReference>
<dbReference type="PROSITE" id="PS50011">
    <property type="entry name" value="PROTEIN_KINASE_DOM"/>
    <property type="match status" value="1"/>
</dbReference>
<dbReference type="PROSITE" id="PS00108">
    <property type="entry name" value="PROTEIN_KINASE_ST"/>
    <property type="match status" value="1"/>
</dbReference>
<protein>
    <recommendedName>
        <fullName evidence="1">Serine/threonine-protein kinase ATG1</fullName>
        <ecNumber evidence="1">2.7.11.1</ecNumber>
    </recommendedName>
    <alternativeName>
        <fullName evidence="1">Autophagy-related protein 1</fullName>
    </alternativeName>
</protein>
<comment type="function">
    <text evidence="1">Serine/threonine protein kinase involved in the cytoplasm to vacuole transport (Cvt) and found to be essential in autophagy, where it is required for the formation of autophagosomes. Involved in the clearance of protein aggregates which cannot be efficiently cleared by the proteasome. Required for selective autophagic degradation of the nucleus (nucleophagy) as well as for mitophagy which contributes to regulate mitochondrial quantity and quality by eliminating the mitochondria to a basal level to fulfill cellular energy requirements and preventing excess ROS production. Also involved in endoplasmic reticulum-specific autophagic process, in selective removal of ER-associated degradation (ERAD) substrates. Plays a key role in ATG9 and ATG23 cycling through the pre-autophagosomal structure and is necessary to promote ATG18 binding to ATG9 through phosphorylation of ATG9. Catalyzes phosphorylation of ATG4, decreasing the interaction between ATG4 and ATG8 and impairing deconjugation of PE-conjugated forms of ATG8.</text>
</comment>
<comment type="catalytic activity">
    <reaction evidence="1">
        <text>L-seryl-[protein] + ATP = O-phospho-L-seryl-[protein] + ADP + H(+)</text>
        <dbReference type="Rhea" id="RHEA:17989"/>
        <dbReference type="Rhea" id="RHEA-COMP:9863"/>
        <dbReference type="Rhea" id="RHEA-COMP:11604"/>
        <dbReference type="ChEBI" id="CHEBI:15378"/>
        <dbReference type="ChEBI" id="CHEBI:29999"/>
        <dbReference type="ChEBI" id="CHEBI:30616"/>
        <dbReference type="ChEBI" id="CHEBI:83421"/>
        <dbReference type="ChEBI" id="CHEBI:456216"/>
        <dbReference type="EC" id="2.7.11.1"/>
    </reaction>
</comment>
<comment type="catalytic activity">
    <reaction evidence="1">
        <text>L-threonyl-[protein] + ATP = O-phospho-L-threonyl-[protein] + ADP + H(+)</text>
        <dbReference type="Rhea" id="RHEA:46608"/>
        <dbReference type="Rhea" id="RHEA-COMP:11060"/>
        <dbReference type="Rhea" id="RHEA-COMP:11605"/>
        <dbReference type="ChEBI" id="CHEBI:15378"/>
        <dbReference type="ChEBI" id="CHEBI:30013"/>
        <dbReference type="ChEBI" id="CHEBI:30616"/>
        <dbReference type="ChEBI" id="CHEBI:61977"/>
        <dbReference type="ChEBI" id="CHEBI:456216"/>
        <dbReference type="EC" id="2.7.11.1"/>
    </reaction>
</comment>
<comment type="subunit">
    <text evidence="1">Homodimer. Forms a ternary complex with ATG13 and ATG17.</text>
</comment>
<comment type="subcellular location">
    <subcellularLocation>
        <location evidence="1">Cytoplasm</location>
    </subcellularLocation>
    <subcellularLocation>
        <location evidence="1">Preautophagosomal structure membrane</location>
        <topology evidence="1">Peripheral membrane protein</topology>
    </subcellularLocation>
</comment>
<comment type="similarity">
    <text evidence="2">Belongs to the protein kinase superfamily. Ser/Thr protein kinase family. APG1/unc-51/ULK1 subfamily.</text>
</comment>
<accession>Q75CH3</accession>
<name>ATG1_EREGS</name>
<proteinExistence type="inferred from homology"/>
<organism>
    <name type="scientific">Eremothecium gossypii (strain ATCC 10895 / CBS 109.51 / FGSC 9923 / NRRL Y-1056)</name>
    <name type="common">Yeast</name>
    <name type="synonym">Ashbya gossypii</name>
    <dbReference type="NCBI Taxonomy" id="284811"/>
    <lineage>
        <taxon>Eukaryota</taxon>
        <taxon>Fungi</taxon>
        <taxon>Dikarya</taxon>
        <taxon>Ascomycota</taxon>
        <taxon>Saccharomycotina</taxon>
        <taxon>Saccharomycetes</taxon>
        <taxon>Saccharomycetales</taxon>
        <taxon>Saccharomycetaceae</taxon>
        <taxon>Eremothecium</taxon>
    </lineage>
</organism>
<feature type="chain" id="PRO_0000085638" description="Serine/threonine-protein kinase ATG1">
    <location>
        <begin position="1"/>
        <end position="972"/>
    </location>
</feature>
<feature type="domain" description="Protein kinase" evidence="2">
    <location>
        <begin position="18"/>
        <end position="319"/>
    </location>
</feature>
<feature type="region of interest" description="Disordered" evidence="4">
    <location>
        <begin position="359"/>
        <end position="394"/>
    </location>
</feature>
<feature type="region of interest" description="Disordered" evidence="4">
    <location>
        <begin position="424"/>
        <end position="444"/>
    </location>
</feature>
<feature type="region of interest" description="Disordered" evidence="4">
    <location>
        <begin position="467"/>
        <end position="506"/>
    </location>
</feature>
<feature type="region of interest" description="Disordered" evidence="4">
    <location>
        <begin position="562"/>
        <end position="605"/>
    </location>
</feature>
<feature type="region of interest" description="Disordered" evidence="4">
    <location>
        <begin position="743"/>
        <end position="764"/>
    </location>
</feature>
<feature type="compositionally biased region" description="Basic and acidic residues" evidence="4">
    <location>
        <begin position="424"/>
        <end position="436"/>
    </location>
</feature>
<feature type="compositionally biased region" description="Polar residues" evidence="4">
    <location>
        <begin position="562"/>
        <end position="584"/>
    </location>
</feature>
<feature type="compositionally biased region" description="Low complexity" evidence="4">
    <location>
        <begin position="585"/>
        <end position="605"/>
    </location>
</feature>
<feature type="compositionally biased region" description="Basic and acidic residues" evidence="4">
    <location>
        <begin position="750"/>
        <end position="759"/>
    </location>
</feature>
<feature type="active site" description="Proton acceptor" evidence="2 3">
    <location>
        <position position="166"/>
    </location>
</feature>
<feature type="binding site" evidence="2">
    <location>
        <begin position="24"/>
        <end position="32"/>
    </location>
    <ligand>
        <name>ATP</name>
        <dbReference type="ChEBI" id="CHEBI:30616"/>
    </ligand>
</feature>
<feature type="binding site" evidence="2">
    <location>
        <position position="48"/>
    </location>
    <ligand>
        <name>ATP</name>
        <dbReference type="ChEBI" id="CHEBI:30616"/>
    </ligand>
</feature>
<gene>
    <name evidence="1" type="primary">ATG1</name>
    <name evidence="5" type="ordered locus">ACL054W</name>
</gene>
<reference key="1">
    <citation type="journal article" date="2004" name="Science">
        <title>The Ashbya gossypii genome as a tool for mapping the ancient Saccharomyces cerevisiae genome.</title>
        <authorList>
            <person name="Dietrich F.S."/>
            <person name="Voegeli S."/>
            <person name="Brachat S."/>
            <person name="Lerch A."/>
            <person name="Gates K."/>
            <person name="Steiner S."/>
            <person name="Mohr C."/>
            <person name="Poehlmann R."/>
            <person name="Luedi P."/>
            <person name="Choi S."/>
            <person name="Wing R.A."/>
            <person name="Flavier A."/>
            <person name="Gaffney T.D."/>
            <person name="Philippsen P."/>
        </authorList>
    </citation>
    <scope>NUCLEOTIDE SEQUENCE [LARGE SCALE GENOMIC DNA]</scope>
    <source>
        <strain>ATCC 10895 / CBS 109.51 / FGSC 9923 / NRRL Y-1056</strain>
    </source>
</reference>
<reference key="2">
    <citation type="journal article" date="2013" name="G3 (Bethesda)">
        <title>Genomes of Ashbya fungi isolated from insects reveal four mating-type loci, numerous translocations, lack of transposons, and distinct gene duplications.</title>
        <authorList>
            <person name="Dietrich F.S."/>
            <person name="Voegeli S."/>
            <person name="Kuo S."/>
            <person name="Philippsen P."/>
        </authorList>
    </citation>
    <scope>GENOME REANNOTATION</scope>
    <source>
        <strain>ATCC 10895 / CBS 109.51 / FGSC 9923 / NRRL Y-1056</strain>
    </source>
</reference>